<accession>Q2J6M0</accession>
<comment type="function">
    <text evidence="1">Peptide chain release factor 1 directs the termination of translation in response to the peptide chain termination codons UAG and UAA.</text>
</comment>
<comment type="subcellular location">
    <subcellularLocation>
        <location evidence="1">Cytoplasm</location>
    </subcellularLocation>
</comment>
<comment type="PTM">
    <text evidence="1">Methylated by PrmC. Methylation increases the termination efficiency of RF1.</text>
</comment>
<comment type="similarity">
    <text evidence="1">Belongs to the prokaryotic/mitochondrial release factor family.</text>
</comment>
<proteinExistence type="inferred from homology"/>
<gene>
    <name evidence="1" type="primary">prfA</name>
    <name type="ordered locus">Francci3_3720</name>
</gene>
<reference key="1">
    <citation type="journal article" date="2007" name="Genome Res.">
        <title>Genome characteristics of facultatively symbiotic Frankia sp. strains reflect host range and host plant biogeography.</title>
        <authorList>
            <person name="Normand P."/>
            <person name="Lapierre P."/>
            <person name="Tisa L.S."/>
            <person name="Gogarten J.P."/>
            <person name="Alloisio N."/>
            <person name="Bagnarol E."/>
            <person name="Bassi C.A."/>
            <person name="Berry A.M."/>
            <person name="Bickhart D.M."/>
            <person name="Choisne N."/>
            <person name="Couloux A."/>
            <person name="Cournoyer B."/>
            <person name="Cruveiller S."/>
            <person name="Daubin V."/>
            <person name="Demange N."/>
            <person name="Francino M.P."/>
            <person name="Goltsman E."/>
            <person name="Huang Y."/>
            <person name="Kopp O.R."/>
            <person name="Labarre L."/>
            <person name="Lapidus A."/>
            <person name="Lavire C."/>
            <person name="Marechal J."/>
            <person name="Martinez M."/>
            <person name="Mastronunzio J.E."/>
            <person name="Mullin B.C."/>
            <person name="Niemann J."/>
            <person name="Pujic P."/>
            <person name="Rawnsley T."/>
            <person name="Rouy Z."/>
            <person name="Schenowitz C."/>
            <person name="Sellstedt A."/>
            <person name="Tavares F."/>
            <person name="Tomkins J.P."/>
            <person name="Vallenet D."/>
            <person name="Valverde C."/>
            <person name="Wall L.G."/>
            <person name="Wang Y."/>
            <person name="Medigue C."/>
            <person name="Benson D.R."/>
        </authorList>
    </citation>
    <scope>NUCLEOTIDE SEQUENCE [LARGE SCALE GENOMIC DNA]</scope>
    <source>
        <strain>DSM 45818 / CECT 9043 / HFP020203 / CcI3</strain>
    </source>
</reference>
<name>RF1_FRACC</name>
<sequence>MTSPLDGLIAEHAEIEGQLADPAVHNDPAKARALSRRYAQLAPVVDLARELDRVEGDLAAARELALLDPSFRDEVQDLGEELARLNDRLRAYLVPIDPDDARDAILEVKAGAGGEESALFAGDLLRMYLRYAERRGWKTEILDANPSDLGGYRDVSVAVKARGPAGPGDGVYGRLRFEGGVHRVQRVPVTESAGRIHTSAAGVLVLPEAEEVDVEIDPNDLRIDVFRSSGPGGQSVNTTDSAVRITHIPTGVVVSCQNEKSQLQNKESALRILRARLLGAAREKAESEASLARASQVRTVDRSERVRTYNFAENRISDHRVGYKAHNLDQVLDGELDEVLDALAAADLDARLAAQAS</sequence>
<dbReference type="EMBL" id="CP000249">
    <property type="protein sequence ID" value="ABD13072.1"/>
    <property type="molecule type" value="Genomic_DNA"/>
</dbReference>
<dbReference type="RefSeq" id="WP_011438096.1">
    <property type="nucleotide sequence ID" value="NZ_LRTJ01000048.1"/>
</dbReference>
<dbReference type="SMR" id="Q2J6M0"/>
<dbReference type="STRING" id="106370.Francci3_3720"/>
<dbReference type="KEGG" id="fra:Francci3_3720"/>
<dbReference type="eggNOG" id="COG0216">
    <property type="taxonomic scope" value="Bacteria"/>
</dbReference>
<dbReference type="HOGENOM" id="CLU_036856_0_1_11"/>
<dbReference type="OrthoDB" id="9806673at2"/>
<dbReference type="PhylomeDB" id="Q2J6M0"/>
<dbReference type="Proteomes" id="UP000001937">
    <property type="component" value="Chromosome"/>
</dbReference>
<dbReference type="GO" id="GO:0005737">
    <property type="term" value="C:cytoplasm"/>
    <property type="evidence" value="ECO:0007669"/>
    <property type="project" value="UniProtKB-SubCell"/>
</dbReference>
<dbReference type="GO" id="GO:0016149">
    <property type="term" value="F:translation release factor activity, codon specific"/>
    <property type="evidence" value="ECO:0007669"/>
    <property type="project" value="UniProtKB-UniRule"/>
</dbReference>
<dbReference type="FunFam" id="3.30.160.20:FF:000004">
    <property type="entry name" value="Peptide chain release factor 1"/>
    <property type="match status" value="1"/>
</dbReference>
<dbReference type="FunFam" id="3.30.70.1660:FF:000002">
    <property type="entry name" value="Peptide chain release factor 1"/>
    <property type="match status" value="1"/>
</dbReference>
<dbReference type="Gene3D" id="3.30.160.20">
    <property type="match status" value="1"/>
</dbReference>
<dbReference type="Gene3D" id="3.30.70.1660">
    <property type="match status" value="1"/>
</dbReference>
<dbReference type="Gene3D" id="6.10.140.1950">
    <property type="match status" value="1"/>
</dbReference>
<dbReference type="HAMAP" id="MF_00093">
    <property type="entry name" value="Rel_fac_1"/>
    <property type="match status" value="1"/>
</dbReference>
<dbReference type="InterPro" id="IPR005139">
    <property type="entry name" value="PCRF"/>
</dbReference>
<dbReference type="InterPro" id="IPR000352">
    <property type="entry name" value="Pep_chain_release_fac_I"/>
</dbReference>
<dbReference type="InterPro" id="IPR045853">
    <property type="entry name" value="Pep_chain_release_fac_I_sf"/>
</dbReference>
<dbReference type="InterPro" id="IPR050057">
    <property type="entry name" value="Prokaryotic/Mito_RF"/>
</dbReference>
<dbReference type="InterPro" id="IPR004373">
    <property type="entry name" value="RF-1"/>
</dbReference>
<dbReference type="NCBIfam" id="TIGR00019">
    <property type="entry name" value="prfA"/>
    <property type="match status" value="1"/>
</dbReference>
<dbReference type="NCBIfam" id="NF001859">
    <property type="entry name" value="PRK00591.1"/>
    <property type="match status" value="1"/>
</dbReference>
<dbReference type="PANTHER" id="PTHR43804">
    <property type="entry name" value="LD18447P"/>
    <property type="match status" value="1"/>
</dbReference>
<dbReference type="PANTHER" id="PTHR43804:SF7">
    <property type="entry name" value="LD18447P"/>
    <property type="match status" value="1"/>
</dbReference>
<dbReference type="Pfam" id="PF03462">
    <property type="entry name" value="PCRF"/>
    <property type="match status" value="1"/>
</dbReference>
<dbReference type="Pfam" id="PF00472">
    <property type="entry name" value="RF-1"/>
    <property type="match status" value="1"/>
</dbReference>
<dbReference type="SMART" id="SM00937">
    <property type="entry name" value="PCRF"/>
    <property type="match status" value="1"/>
</dbReference>
<dbReference type="SUPFAM" id="SSF75620">
    <property type="entry name" value="Release factor"/>
    <property type="match status" value="1"/>
</dbReference>
<dbReference type="PROSITE" id="PS00745">
    <property type="entry name" value="RF_PROK_I"/>
    <property type="match status" value="1"/>
</dbReference>
<feature type="chain" id="PRO_0000263278" description="Peptide chain release factor 1">
    <location>
        <begin position="1"/>
        <end position="357"/>
    </location>
</feature>
<feature type="modified residue" description="N5-methylglutamine" evidence="1">
    <location>
        <position position="234"/>
    </location>
</feature>
<organism>
    <name type="scientific">Frankia casuarinae (strain DSM 45818 / CECT 9043 / HFP020203 / CcI3)</name>
    <dbReference type="NCBI Taxonomy" id="106370"/>
    <lineage>
        <taxon>Bacteria</taxon>
        <taxon>Bacillati</taxon>
        <taxon>Actinomycetota</taxon>
        <taxon>Actinomycetes</taxon>
        <taxon>Frankiales</taxon>
        <taxon>Frankiaceae</taxon>
        <taxon>Frankia</taxon>
    </lineage>
</organism>
<keyword id="KW-0963">Cytoplasm</keyword>
<keyword id="KW-0488">Methylation</keyword>
<keyword id="KW-0648">Protein biosynthesis</keyword>
<keyword id="KW-1185">Reference proteome</keyword>
<protein>
    <recommendedName>
        <fullName evidence="1">Peptide chain release factor 1</fullName>
        <shortName evidence="1">RF-1</shortName>
    </recommendedName>
</protein>
<evidence type="ECO:0000255" key="1">
    <source>
        <dbReference type="HAMAP-Rule" id="MF_00093"/>
    </source>
</evidence>